<comment type="function">
    <text evidence="1">Beta-1-bungarotoxin is a presynaptic neurotoxin of the venom. The B chain is homologous to venom basic protease inhibitors but has no protease inhibitor activity and blocks voltage-gated potassium channels (Kv) (By similarity).</text>
</comment>
<comment type="subunit">
    <text evidence="1">Heterodimer; disulfide-linked. The A chains have phospholipase A2 activity and the B chains show homology with the basic protease inhibitors (By similarity).</text>
</comment>
<comment type="subcellular location">
    <subcellularLocation>
        <location evidence="1">Secreted</location>
    </subcellularLocation>
</comment>
<comment type="tissue specificity">
    <text>Expressed by the venom gland.</text>
</comment>
<comment type="similarity">
    <text evidence="3">Belongs to the venom Kunitz-type family.</text>
</comment>
<organism>
    <name type="scientific">Bungarus fasciatus</name>
    <name type="common">Banded krait</name>
    <name type="synonym">Pseudoboa fasciata</name>
    <dbReference type="NCBI Taxonomy" id="8613"/>
    <lineage>
        <taxon>Eukaryota</taxon>
        <taxon>Metazoa</taxon>
        <taxon>Chordata</taxon>
        <taxon>Craniata</taxon>
        <taxon>Vertebrata</taxon>
        <taxon>Euteleostomi</taxon>
        <taxon>Lepidosauria</taxon>
        <taxon>Squamata</taxon>
        <taxon>Bifurcata</taxon>
        <taxon>Unidentata</taxon>
        <taxon>Episquamata</taxon>
        <taxon>Toxicofera</taxon>
        <taxon>Serpentes</taxon>
        <taxon>Colubroidea</taxon>
        <taxon>Elapidae</taxon>
        <taxon>Bungarinae</taxon>
        <taxon>Bungarus</taxon>
    </lineage>
</organism>
<dbReference type="EMBL" id="EU220208">
    <property type="protein sequence ID" value="ABY71037.1"/>
    <property type="molecule type" value="mRNA"/>
</dbReference>
<dbReference type="SMR" id="B2KTG2"/>
<dbReference type="GO" id="GO:0005615">
    <property type="term" value="C:extracellular space"/>
    <property type="evidence" value="ECO:0007669"/>
    <property type="project" value="TreeGrafter"/>
</dbReference>
<dbReference type="GO" id="GO:0015459">
    <property type="term" value="F:potassium channel regulator activity"/>
    <property type="evidence" value="ECO:0007669"/>
    <property type="project" value="UniProtKB-KW"/>
</dbReference>
<dbReference type="GO" id="GO:0004867">
    <property type="term" value="F:serine-type endopeptidase inhibitor activity"/>
    <property type="evidence" value="ECO:0007669"/>
    <property type="project" value="InterPro"/>
</dbReference>
<dbReference type="GO" id="GO:0090729">
    <property type="term" value="F:toxin activity"/>
    <property type="evidence" value="ECO:0007669"/>
    <property type="project" value="UniProtKB-KW"/>
</dbReference>
<dbReference type="Gene3D" id="4.10.410.10">
    <property type="entry name" value="Pancreatic trypsin inhibitor Kunitz domain"/>
    <property type="match status" value="1"/>
</dbReference>
<dbReference type="InterPro" id="IPR002223">
    <property type="entry name" value="Kunitz_BPTI"/>
</dbReference>
<dbReference type="InterPro" id="IPR036880">
    <property type="entry name" value="Kunitz_BPTI_sf"/>
</dbReference>
<dbReference type="InterPro" id="IPR020901">
    <property type="entry name" value="Prtase_inh_Kunz-CS"/>
</dbReference>
<dbReference type="InterPro" id="IPR050098">
    <property type="entry name" value="TFPI/VKTCI-like"/>
</dbReference>
<dbReference type="PANTHER" id="PTHR10083:SF374">
    <property type="entry name" value="BPTI_KUNITZ INHIBITOR DOMAIN-CONTAINING PROTEIN"/>
    <property type="match status" value="1"/>
</dbReference>
<dbReference type="PANTHER" id="PTHR10083">
    <property type="entry name" value="KUNITZ-TYPE PROTEASE INHIBITOR-RELATED"/>
    <property type="match status" value="1"/>
</dbReference>
<dbReference type="Pfam" id="PF00014">
    <property type="entry name" value="Kunitz_BPTI"/>
    <property type="match status" value="1"/>
</dbReference>
<dbReference type="PRINTS" id="PR00759">
    <property type="entry name" value="BASICPTASE"/>
</dbReference>
<dbReference type="SMART" id="SM00131">
    <property type="entry name" value="KU"/>
    <property type="match status" value="1"/>
</dbReference>
<dbReference type="SUPFAM" id="SSF57362">
    <property type="entry name" value="BPTI-like"/>
    <property type="match status" value="1"/>
</dbReference>
<dbReference type="PROSITE" id="PS00280">
    <property type="entry name" value="BPTI_KUNITZ_1"/>
    <property type="match status" value="1"/>
</dbReference>
<dbReference type="PROSITE" id="PS50279">
    <property type="entry name" value="BPTI_KUNITZ_2"/>
    <property type="match status" value="1"/>
</dbReference>
<evidence type="ECO:0000250" key="1"/>
<evidence type="ECO:0000255" key="2">
    <source>
        <dbReference type="PROSITE-ProRule" id="PRU00031"/>
    </source>
</evidence>
<evidence type="ECO:0000305" key="3"/>
<keyword id="KW-1015">Disulfide bond</keyword>
<keyword id="KW-0872">Ion channel impairing toxin</keyword>
<keyword id="KW-0528">Neurotoxin</keyword>
<keyword id="KW-0632">Potassium channel impairing toxin</keyword>
<keyword id="KW-0638">Presynaptic neurotoxin</keyword>
<keyword id="KW-0964">Secreted</keyword>
<keyword id="KW-0732">Signal</keyword>
<keyword id="KW-0800">Toxin</keyword>
<keyword id="KW-1220">Voltage-gated potassium channel impairing toxin</keyword>
<feature type="signal peptide" evidence="1">
    <location>
        <begin position="1"/>
        <end position="24"/>
    </location>
</feature>
<feature type="chain" id="PRO_0000376875" description="Kunitz-type serine protease inhibitor homolog beta-bungarotoxin BF B1 chain">
    <location>
        <begin position="25"/>
        <end position="85"/>
    </location>
</feature>
<feature type="domain" description="BPTI/Kunitz inhibitor" evidence="2">
    <location>
        <begin position="31"/>
        <end position="81"/>
    </location>
</feature>
<feature type="disulfide bond" evidence="2">
    <location>
        <begin position="31"/>
        <end position="81"/>
    </location>
</feature>
<feature type="disulfide bond" evidence="2">
    <location>
        <begin position="40"/>
        <end position="64"/>
    </location>
</feature>
<feature type="disulfide bond" evidence="2">
    <location>
        <begin position="56"/>
        <end position="77"/>
    </location>
</feature>
<feature type="disulfide bond" description="Interchain (with an A chain)" evidence="2">
    <location>
        <position position="79"/>
    </location>
</feature>
<protein>
    <recommendedName>
        <fullName>Kunitz-type serine protease inhibitor homolog beta-bungarotoxin BF B1 chain</fullName>
    </recommendedName>
</protein>
<sequence>MSSGGLLLLLGLLTLWTELTPVSSRERHPDCDKPPDTGRCRKNVRAFYYKPSAKRCVQFIYGGCNANGNHFKSDHLCRCECLEYP</sequence>
<reference key="1">
    <citation type="journal article" date="2008" name="Peptides">
        <title>A novel serine protease inhibitor from Bungarus fasciatus venom.</title>
        <authorList>
            <person name="Lu J."/>
            <person name="Yang H."/>
            <person name="Yu H."/>
            <person name="Gao W."/>
            <person name="Lai R."/>
            <person name="Liu J."/>
            <person name="Liang X."/>
        </authorList>
    </citation>
    <scope>NUCLEOTIDE SEQUENCE [MRNA]</scope>
    <source>
        <tissue>Venom gland</tissue>
    </source>
</reference>
<proteinExistence type="evidence at transcript level"/>
<accession>B2KTG2</accession>
<name>VKTH1_BUNFA</name>